<name>SDA1_RAT</name>
<dbReference type="EMBL" id="BC083620">
    <property type="protein sequence ID" value="AAH83620.1"/>
    <property type="molecule type" value="mRNA"/>
</dbReference>
<dbReference type="RefSeq" id="NP_001006959.1">
    <property type="nucleotide sequence ID" value="NM_001006958.2"/>
</dbReference>
<dbReference type="SMR" id="Q5XIQ5"/>
<dbReference type="BioGRID" id="252940">
    <property type="interactions" value="1"/>
</dbReference>
<dbReference type="FunCoup" id="Q5XIQ5">
    <property type="interactions" value="3049"/>
</dbReference>
<dbReference type="STRING" id="10116.ENSRNOP00000035588"/>
<dbReference type="GlyGen" id="Q5XIQ5">
    <property type="glycosylation" value="1 site"/>
</dbReference>
<dbReference type="iPTMnet" id="Q5XIQ5"/>
<dbReference type="PhosphoSitePlus" id="Q5XIQ5"/>
<dbReference type="PaxDb" id="10116-ENSRNOP00000035588"/>
<dbReference type="GeneID" id="289504"/>
<dbReference type="KEGG" id="rno:289504"/>
<dbReference type="UCSC" id="RGD:1359112">
    <property type="organism name" value="rat"/>
</dbReference>
<dbReference type="AGR" id="RGD:1359112"/>
<dbReference type="CTD" id="55153"/>
<dbReference type="RGD" id="1359112">
    <property type="gene designation" value="Sdad1"/>
</dbReference>
<dbReference type="VEuPathDB" id="HostDB:ENSRNOG00000022229"/>
<dbReference type="eggNOG" id="KOG2229">
    <property type="taxonomic scope" value="Eukaryota"/>
</dbReference>
<dbReference type="HOGENOM" id="CLU_009161_3_1_1"/>
<dbReference type="InParanoid" id="Q5XIQ5"/>
<dbReference type="OrthoDB" id="67188at9989"/>
<dbReference type="PhylomeDB" id="Q5XIQ5"/>
<dbReference type="TreeFam" id="TF105727"/>
<dbReference type="PRO" id="PR:Q5XIQ5"/>
<dbReference type="Proteomes" id="UP000002494">
    <property type="component" value="Chromosome 14"/>
</dbReference>
<dbReference type="Bgee" id="ENSRNOG00000022229">
    <property type="expression patterns" value="Expressed in testis and 19 other cell types or tissues"/>
</dbReference>
<dbReference type="GO" id="GO:0005730">
    <property type="term" value="C:nucleolus"/>
    <property type="evidence" value="ECO:0000250"/>
    <property type="project" value="UniProtKB"/>
</dbReference>
<dbReference type="GO" id="GO:1990830">
    <property type="term" value="P:cellular response to leukemia inhibitory factor"/>
    <property type="evidence" value="ECO:0000266"/>
    <property type="project" value="RGD"/>
</dbReference>
<dbReference type="GO" id="GO:0015031">
    <property type="term" value="P:protein transport"/>
    <property type="evidence" value="ECO:0007669"/>
    <property type="project" value="UniProtKB-KW"/>
</dbReference>
<dbReference type="GO" id="GO:0042273">
    <property type="term" value="P:ribosomal large subunit biogenesis"/>
    <property type="evidence" value="ECO:0000318"/>
    <property type="project" value="GO_Central"/>
</dbReference>
<dbReference type="GO" id="GO:0000055">
    <property type="term" value="P:ribosomal large subunit export from nucleus"/>
    <property type="evidence" value="ECO:0000318"/>
    <property type="project" value="GO_Central"/>
</dbReference>
<dbReference type="InterPro" id="IPR016024">
    <property type="entry name" value="ARM-type_fold"/>
</dbReference>
<dbReference type="InterPro" id="IPR027312">
    <property type="entry name" value="Sda1"/>
</dbReference>
<dbReference type="InterPro" id="IPR048292">
    <property type="entry name" value="SDA1_C"/>
</dbReference>
<dbReference type="InterPro" id="IPR007949">
    <property type="entry name" value="SDA1_MD"/>
</dbReference>
<dbReference type="InterPro" id="IPR012977">
    <property type="entry name" value="SDA1_N"/>
</dbReference>
<dbReference type="PANTHER" id="PTHR12730">
    <property type="entry name" value="HSDA/SDA1-RELATED"/>
    <property type="match status" value="1"/>
</dbReference>
<dbReference type="PANTHER" id="PTHR12730:SF0">
    <property type="entry name" value="PROTEIN SDA1 HOMOLOG"/>
    <property type="match status" value="1"/>
</dbReference>
<dbReference type="Pfam" id="PF21638">
    <property type="entry name" value="SDA1_C"/>
    <property type="match status" value="1"/>
</dbReference>
<dbReference type="Pfam" id="PF05285">
    <property type="entry name" value="SDA1_dom"/>
    <property type="match status" value="1"/>
</dbReference>
<dbReference type="Pfam" id="PF08158">
    <property type="entry name" value="SDA1_HEAT"/>
    <property type="match status" value="1"/>
</dbReference>
<dbReference type="SUPFAM" id="SSF48371">
    <property type="entry name" value="ARM repeat"/>
    <property type="match status" value="1"/>
</dbReference>
<sequence>MSGRNNNKLPSNLPQLQNLIKRDPPAYVEEFLQQYNHYKSNMEIFKLQPNKPSKELAELVMFMAQIGHCYPEHLSEFPQELKDLLSYNHTVLDPDLRMTFCKALILLRNKNLINPSDLLELFFELLRCRDKLLRKTLYTHIVTDIKNINAKHKNNKVNVVLQNFMYTMLRDSNATAAKMSLDVMIELYRRNIWNDAKTVNVITTACFSKITKILVAALTFFLGKDEEEKQDSDSESEDDGPTARDLLVQYATGKKGSKNKKKLEKAMKVLKKQKKKKKPEVFNFSAIHLIHDPQDFAEKLLKQLESCKERFEVKMMLMNLISRLVGIHELFLFNFYPFVQRFLQPHQREVTKILLFAAQASHHLVPPEIIQSLLLTVANNFVTDKNSGEVMTVGINAIKEITARCPLAMTEELLQDLAQYKTHKDKNVMMSARTLIHLFRTLNPQMLQKKFRGKPTEASIEARIQEYGELDAKDYIPGAEVLELEKEENTENDEDGWESASLSEEEEDGEWVDVHHSSDEEQQAVAKKLDSMPMEERKAKAAAVSTSRVLTQDDFQKIRMAQMKKEMDAAPGKAQKRKYLDMDSDEESRGELLSLRDIERLHKKPKSDKETRLATAMAGRTDRKEFVRKKTKINPFSSSTNKEKKKQKNFMMMRYSQNVRSKTSRSFREKQLALRDALLKKRKRMK</sequence>
<protein>
    <recommendedName>
        <fullName>Protein SDA1 homolog</fullName>
    </recommendedName>
    <alternativeName>
        <fullName>SDA1 domain-containing protein 1</fullName>
    </alternativeName>
</protein>
<organism>
    <name type="scientific">Rattus norvegicus</name>
    <name type="common">Rat</name>
    <dbReference type="NCBI Taxonomy" id="10116"/>
    <lineage>
        <taxon>Eukaryota</taxon>
        <taxon>Metazoa</taxon>
        <taxon>Chordata</taxon>
        <taxon>Craniata</taxon>
        <taxon>Vertebrata</taxon>
        <taxon>Euteleostomi</taxon>
        <taxon>Mammalia</taxon>
        <taxon>Eutheria</taxon>
        <taxon>Euarchontoglires</taxon>
        <taxon>Glires</taxon>
        <taxon>Rodentia</taxon>
        <taxon>Myomorpha</taxon>
        <taxon>Muroidea</taxon>
        <taxon>Muridae</taxon>
        <taxon>Murinae</taxon>
        <taxon>Rattus</taxon>
    </lineage>
</organism>
<reference key="1">
    <citation type="journal article" date="2004" name="Genome Res.">
        <title>The status, quality, and expansion of the NIH full-length cDNA project: the Mammalian Gene Collection (MGC).</title>
        <authorList>
            <consortium name="The MGC Project Team"/>
        </authorList>
    </citation>
    <scope>NUCLEOTIDE SEQUENCE [LARGE SCALE MRNA]</scope>
    <source>
        <tissue>Testis</tissue>
    </source>
</reference>
<reference key="2">
    <citation type="journal article" date="2012" name="Nat. Commun.">
        <title>Quantitative maps of protein phosphorylation sites across 14 different rat organs and tissues.</title>
        <authorList>
            <person name="Lundby A."/>
            <person name="Secher A."/>
            <person name="Lage K."/>
            <person name="Nordsborg N.B."/>
            <person name="Dmytriyev A."/>
            <person name="Lundby C."/>
            <person name="Olsen J.V."/>
        </authorList>
    </citation>
    <scope>PHOSPHORYLATION [LARGE SCALE ANALYSIS] AT SER-584 AND SER-588</scope>
    <scope>IDENTIFICATION BY MASS SPECTROMETRY [LARGE SCALE ANALYSIS]</scope>
</reference>
<evidence type="ECO:0000250" key="1"/>
<evidence type="ECO:0000250" key="2">
    <source>
        <dbReference type="UniProtKB" id="Q9NVU7"/>
    </source>
</evidence>
<evidence type="ECO:0000255" key="3"/>
<evidence type="ECO:0000256" key="4">
    <source>
        <dbReference type="SAM" id="MobiDB-lite"/>
    </source>
</evidence>
<evidence type="ECO:0000305" key="5"/>
<evidence type="ECO:0007744" key="6">
    <source>
    </source>
</evidence>
<accession>Q5XIQ5</accession>
<keyword id="KW-0175">Coiled coil</keyword>
<keyword id="KW-0539">Nucleus</keyword>
<keyword id="KW-0597">Phosphoprotein</keyword>
<keyword id="KW-0653">Protein transport</keyword>
<keyword id="KW-1185">Reference proteome</keyword>
<keyword id="KW-0690">Ribosome biogenesis</keyword>
<keyword id="KW-0813">Transport</keyword>
<feature type="chain" id="PRO_0000287484" description="Protein SDA1 homolog">
    <location>
        <begin position="1"/>
        <end position="686"/>
    </location>
</feature>
<feature type="region of interest" description="Disordered" evidence="4">
    <location>
        <begin position="484"/>
        <end position="508"/>
    </location>
</feature>
<feature type="region of interest" description="Disordered" evidence="4">
    <location>
        <begin position="563"/>
        <end position="586"/>
    </location>
</feature>
<feature type="region of interest" description="Disordered" evidence="4">
    <location>
        <begin position="604"/>
        <end position="649"/>
    </location>
</feature>
<feature type="coiled-coil region" evidence="3">
    <location>
        <begin position="254"/>
        <end position="315"/>
    </location>
</feature>
<feature type="compositionally biased region" description="Acidic residues" evidence="4">
    <location>
        <begin position="490"/>
        <end position="508"/>
    </location>
</feature>
<feature type="modified residue" description="Phosphoserine" evidence="2">
    <location>
        <position position="232"/>
    </location>
</feature>
<feature type="modified residue" description="Phosphoserine" evidence="2">
    <location>
        <position position="234"/>
    </location>
</feature>
<feature type="modified residue" description="Phosphoserine" evidence="2">
    <location>
        <position position="236"/>
    </location>
</feature>
<feature type="modified residue" description="Phosphothreonine" evidence="2">
    <location>
        <position position="551"/>
    </location>
</feature>
<feature type="modified residue" description="Phosphoserine" evidence="6">
    <location>
        <position position="584"/>
    </location>
</feature>
<feature type="modified residue" description="Phosphoserine" evidence="6">
    <location>
        <position position="588"/>
    </location>
</feature>
<feature type="modified residue" description="Phosphoserine" evidence="2">
    <location>
        <position position="594"/>
    </location>
</feature>
<proteinExistence type="evidence at protein level"/>
<gene>
    <name type="primary">Sdad1</name>
</gene>
<comment type="function">
    <text evidence="1">Required for 60S pre-ribosomal subunits export to the cytoplasm.</text>
</comment>
<comment type="subcellular location">
    <subcellularLocation>
        <location evidence="1">Nucleus</location>
        <location evidence="1">Nucleolus</location>
    </subcellularLocation>
</comment>
<comment type="similarity">
    <text evidence="5">Belongs to the SDA1 family.</text>
</comment>